<gene>
    <name evidence="1" type="primary">znuC</name>
    <name type="ordered locus">c2272</name>
</gene>
<accession>P0A9X2</accession>
<accession>P52648</accession>
<accession>P76285</accession>
<name>ZNUC_ECOL6</name>
<proteinExistence type="inferred from homology"/>
<reference key="1">
    <citation type="journal article" date="2002" name="Proc. Natl. Acad. Sci. U.S.A.">
        <title>Extensive mosaic structure revealed by the complete genome sequence of uropathogenic Escherichia coli.</title>
        <authorList>
            <person name="Welch R.A."/>
            <person name="Burland V."/>
            <person name="Plunkett G. III"/>
            <person name="Redford P."/>
            <person name="Roesch P."/>
            <person name="Rasko D."/>
            <person name="Buckles E.L."/>
            <person name="Liou S.-R."/>
            <person name="Boutin A."/>
            <person name="Hackett J."/>
            <person name="Stroud D."/>
            <person name="Mayhew G.F."/>
            <person name="Rose D.J."/>
            <person name="Zhou S."/>
            <person name="Schwartz D.C."/>
            <person name="Perna N.T."/>
            <person name="Mobley H.L.T."/>
            <person name="Donnenberg M.S."/>
            <person name="Blattner F.R."/>
        </authorList>
    </citation>
    <scope>NUCLEOTIDE SEQUENCE [LARGE SCALE GENOMIC DNA]</scope>
    <source>
        <strain>CFT073 / ATCC 700928 / UPEC</strain>
    </source>
</reference>
<dbReference type="EC" id="7.2.2.20" evidence="1"/>
<dbReference type="EMBL" id="AE014075">
    <property type="protein sequence ID" value="AAN80729.1"/>
    <property type="molecule type" value="Genomic_DNA"/>
</dbReference>
<dbReference type="RefSeq" id="WP_000202996.1">
    <property type="nucleotide sequence ID" value="NZ_CP051263.1"/>
</dbReference>
<dbReference type="SMR" id="P0A9X2"/>
<dbReference type="STRING" id="199310.c2272"/>
<dbReference type="GeneID" id="93776132"/>
<dbReference type="KEGG" id="ecc:c2272"/>
<dbReference type="eggNOG" id="COG1121">
    <property type="taxonomic scope" value="Bacteria"/>
</dbReference>
<dbReference type="HOGENOM" id="CLU_000604_1_11_6"/>
<dbReference type="BioCyc" id="ECOL199310:C2272-MONOMER"/>
<dbReference type="Proteomes" id="UP000001410">
    <property type="component" value="Chromosome"/>
</dbReference>
<dbReference type="GO" id="GO:0005886">
    <property type="term" value="C:plasma membrane"/>
    <property type="evidence" value="ECO:0007669"/>
    <property type="project" value="UniProtKB-SubCell"/>
</dbReference>
<dbReference type="GO" id="GO:0015633">
    <property type="term" value="F:ABC-type zinc transporter activity"/>
    <property type="evidence" value="ECO:0007669"/>
    <property type="project" value="UniProtKB-EC"/>
</dbReference>
<dbReference type="GO" id="GO:0005524">
    <property type="term" value="F:ATP binding"/>
    <property type="evidence" value="ECO:0007669"/>
    <property type="project" value="UniProtKB-KW"/>
</dbReference>
<dbReference type="GO" id="GO:0016887">
    <property type="term" value="F:ATP hydrolysis activity"/>
    <property type="evidence" value="ECO:0007669"/>
    <property type="project" value="InterPro"/>
</dbReference>
<dbReference type="GO" id="GO:0010043">
    <property type="term" value="P:response to zinc ion"/>
    <property type="evidence" value="ECO:0007669"/>
    <property type="project" value="TreeGrafter"/>
</dbReference>
<dbReference type="CDD" id="cd03235">
    <property type="entry name" value="ABC_Metallic_Cations"/>
    <property type="match status" value="1"/>
</dbReference>
<dbReference type="FunFam" id="3.40.50.300:FF:000392">
    <property type="entry name" value="Zinc import ATP-binding protein ZnuC"/>
    <property type="match status" value="1"/>
</dbReference>
<dbReference type="Gene3D" id="3.40.50.300">
    <property type="entry name" value="P-loop containing nucleotide triphosphate hydrolases"/>
    <property type="match status" value="1"/>
</dbReference>
<dbReference type="InterPro" id="IPR003593">
    <property type="entry name" value="AAA+_ATPase"/>
</dbReference>
<dbReference type="InterPro" id="IPR003439">
    <property type="entry name" value="ABC_transporter-like_ATP-bd"/>
</dbReference>
<dbReference type="InterPro" id="IPR050153">
    <property type="entry name" value="Metal_Ion_Import_ABC"/>
</dbReference>
<dbReference type="InterPro" id="IPR027417">
    <property type="entry name" value="P-loop_NTPase"/>
</dbReference>
<dbReference type="NCBIfam" id="NF007090">
    <property type="entry name" value="PRK09544.1"/>
    <property type="match status" value="1"/>
</dbReference>
<dbReference type="PANTHER" id="PTHR42734">
    <property type="entry name" value="METAL TRANSPORT SYSTEM ATP-BINDING PROTEIN TM_0124-RELATED"/>
    <property type="match status" value="1"/>
</dbReference>
<dbReference type="PANTHER" id="PTHR42734:SF9">
    <property type="entry name" value="ZINC IMPORT ATP-BINDING PROTEIN ZNUC"/>
    <property type="match status" value="1"/>
</dbReference>
<dbReference type="Pfam" id="PF00005">
    <property type="entry name" value="ABC_tran"/>
    <property type="match status" value="1"/>
</dbReference>
<dbReference type="SMART" id="SM00382">
    <property type="entry name" value="AAA"/>
    <property type="match status" value="1"/>
</dbReference>
<dbReference type="SUPFAM" id="SSF52540">
    <property type="entry name" value="P-loop containing nucleoside triphosphate hydrolases"/>
    <property type="match status" value="1"/>
</dbReference>
<dbReference type="PROSITE" id="PS50893">
    <property type="entry name" value="ABC_TRANSPORTER_2"/>
    <property type="match status" value="1"/>
</dbReference>
<dbReference type="PROSITE" id="PS51298">
    <property type="entry name" value="ZNUC"/>
    <property type="match status" value="1"/>
</dbReference>
<evidence type="ECO:0000255" key="1">
    <source>
        <dbReference type="HAMAP-Rule" id="MF_01725"/>
    </source>
</evidence>
<sequence length="251" mass="27867">MTSLVSLENVSVSFGQRRVLSDVSLELKPGKILTLLGPNGAGKSTLVRVVLGLVTPDEGVIKRNGKLRIGYVPQKLYLDTTLPLTVNRFLRLRPGTHKEDILPALKRVQAGHLINAPMQKLSGGETQRVLLARALLNRPQLLVLDEPTQGVDVNGQVALYDLIDQLRRELDCGVLMVSHDLHLVMAKTDEVLCLNHHICCSGTPEVVSLHPEFISMFGPRGAEQLGIYRHHHNHRHDLQGRIVLRRGNDRS</sequence>
<protein>
    <recommendedName>
        <fullName evidence="1">Zinc import ATP-binding protein ZnuC</fullName>
        <ecNumber evidence="1">7.2.2.20</ecNumber>
    </recommendedName>
</protein>
<feature type="chain" id="PRO_0000093132" description="Zinc import ATP-binding protein ZnuC">
    <location>
        <begin position="1"/>
        <end position="251"/>
    </location>
</feature>
<feature type="domain" description="ABC transporter" evidence="1">
    <location>
        <begin position="5"/>
        <end position="220"/>
    </location>
</feature>
<feature type="binding site" evidence="1">
    <location>
        <begin position="37"/>
        <end position="44"/>
    </location>
    <ligand>
        <name>ATP</name>
        <dbReference type="ChEBI" id="CHEBI:30616"/>
    </ligand>
</feature>
<keyword id="KW-0067">ATP-binding</keyword>
<keyword id="KW-0997">Cell inner membrane</keyword>
<keyword id="KW-1003">Cell membrane</keyword>
<keyword id="KW-0406">Ion transport</keyword>
<keyword id="KW-0472">Membrane</keyword>
<keyword id="KW-0547">Nucleotide-binding</keyword>
<keyword id="KW-1185">Reference proteome</keyword>
<keyword id="KW-1278">Translocase</keyword>
<keyword id="KW-0813">Transport</keyword>
<keyword id="KW-0862">Zinc</keyword>
<keyword id="KW-0864">Zinc transport</keyword>
<comment type="function">
    <text evidence="1">Part of the ABC transporter complex ZnuABC involved in zinc import. Responsible for energy coupling to the transport system.</text>
</comment>
<comment type="catalytic activity">
    <reaction evidence="1">
        <text>Zn(2+)(out) + ATP(in) + H2O(in) = Zn(2+)(in) + ADP(in) + phosphate(in) + H(+)(in)</text>
        <dbReference type="Rhea" id="RHEA:29795"/>
        <dbReference type="ChEBI" id="CHEBI:15377"/>
        <dbReference type="ChEBI" id="CHEBI:15378"/>
        <dbReference type="ChEBI" id="CHEBI:29105"/>
        <dbReference type="ChEBI" id="CHEBI:30616"/>
        <dbReference type="ChEBI" id="CHEBI:43474"/>
        <dbReference type="ChEBI" id="CHEBI:456216"/>
        <dbReference type="EC" id="7.2.2.20"/>
    </reaction>
</comment>
<comment type="subunit">
    <text evidence="1">The complex is composed of two ATP-binding proteins (ZnuC), two transmembrane proteins (ZnuB) and a solute-binding protein (ZnuA).</text>
</comment>
<comment type="subcellular location">
    <subcellularLocation>
        <location evidence="1">Cell inner membrane</location>
        <topology evidence="1">Peripheral membrane protein</topology>
    </subcellularLocation>
</comment>
<comment type="similarity">
    <text evidence="1">Belongs to the ABC transporter superfamily. Zinc importer (TC 3.A.1.15.5) family.</text>
</comment>
<organism>
    <name type="scientific">Escherichia coli O6:H1 (strain CFT073 / ATCC 700928 / UPEC)</name>
    <dbReference type="NCBI Taxonomy" id="199310"/>
    <lineage>
        <taxon>Bacteria</taxon>
        <taxon>Pseudomonadati</taxon>
        <taxon>Pseudomonadota</taxon>
        <taxon>Gammaproteobacteria</taxon>
        <taxon>Enterobacterales</taxon>
        <taxon>Enterobacteriaceae</taxon>
        <taxon>Escherichia</taxon>
    </lineage>
</organism>